<keyword id="KW-0067">ATP-binding</keyword>
<keyword id="KW-0963">Cytoplasm</keyword>
<keyword id="KW-0227">DNA damage</keyword>
<keyword id="KW-0228">DNA excision</keyword>
<keyword id="KW-0234">DNA repair</keyword>
<keyword id="KW-0267">Excision nuclease</keyword>
<keyword id="KW-0547">Nucleotide-binding</keyword>
<keyword id="KW-1185">Reference proteome</keyword>
<keyword id="KW-0742">SOS response</keyword>
<organism>
    <name type="scientific">Protochlamydia amoebophila (strain UWE25)</name>
    <dbReference type="NCBI Taxonomy" id="264201"/>
    <lineage>
        <taxon>Bacteria</taxon>
        <taxon>Pseudomonadati</taxon>
        <taxon>Chlamydiota</taxon>
        <taxon>Chlamydiia</taxon>
        <taxon>Parachlamydiales</taxon>
        <taxon>Parachlamydiaceae</taxon>
        <taxon>Candidatus Protochlamydia</taxon>
    </lineage>
</organism>
<feature type="chain" id="PRO_0000227337" description="UvrABC system protein B">
    <location>
        <begin position="1"/>
        <end position="673"/>
    </location>
</feature>
<feature type="domain" description="Helicase ATP-binding" evidence="1">
    <location>
        <begin position="28"/>
        <end position="414"/>
    </location>
</feature>
<feature type="domain" description="Helicase C-terminal" evidence="1">
    <location>
        <begin position="433"/>
        <end position="595"/>
    </location>
</feature>
<feature type="domain" description="UVR" evidence="1">
    <location>
        <begin position="633"/>
        <end position="668"/>
    </location>
</feature>
<feature type="short sequence motif" description="Beta-hairpin">
    <location>
        <begin position="94"/>
        <end position="117"/>
    </location>
</feature>
<feature type="binding site" evidence="1">
    <location>
        <begin position="41"/>
        <end position="48"/>
    </location>
    <ligand>
        <name>ATP</name>
        <dbReference type="ChEBI" id="CHEBI:30616"/>
    </ligand>
</feature>
<sequence length="673" mass="77789">MNPSQLFQLHTEFEPCGDQPEAINQLVASILQNKRSQVLLGITGSGKTFTMANVIAKVQRPTLILAHNKTLAAQLYQEFKAFFPHNAVEYFVSYYDYYQPEAYVPRTDTYIEKDMSINDKIDKMRLSATRSLLERSDVIIVSSVSCIYGLGSPEYYRGMNLTLSQGQMRRRDDILLHLVEMQYKRNDFEFIRSTFRVRGDVLDIFPAYEEDLAIRVEMFGDEIEQISEIDPLTGKVKRRIASITIYPSSHHVTPEEIRLKAMETIRAELDERRQFYETEKKYLELERIQQRTMYDLEMLKEVGTCKGIENYSRHFSMRQPGAPPPCLLDYFPSDYLLVIDESHQTLPQVHAMFNGDRARKQTLVDFGFRLPSAFDNRPLRFEEVYGRIHQVVYVSATPGAWEVQEAGGEIVEQLIRPTGLLDPIIEIRPASGQVDDCLAEIRSHVSKGGRVLLTTLTKKLSEELTTYLNDLNVKAKYLHSDIDTIERVQIIRDLRLGVFDVLVGINLLREGLDIPEVSLVAILDADKEGFLRSETSLIQTCGRAARNAEGRVIMYADKITKSIKRTLEITESRRALQMRYNEQHGITPRTVKREISVLMESEEDQVTHPTKLEEEIFKAAEEAHHYLTLDEVRLKIKECEKEMKKAAKEFRFEEAADWRDQMRRYQQIELTLA</sequence>
<reference key="1">
    <citation type="journal article" date="2004" name="Science">
        <title>Illuminating the evolutionary history of chlamydiae.</title>
        <authorList>
            <person name="Horn M."/>
            <person name="Collingro A."/>
            <person name="Schmitz-Esser S."/>
            <person name="Beier C.L."/>
            <person name="Purkhold U."/>
            <person name="Fartmann B."/>
            <person name="Brandt P."/>
            <person name="Nyakatura G.J."/>
            <person name="Droege M."/>
            <person name="Frishman D."/>
            <person name="Rattei T."/>
            <person name="Mewes H.-W."/>
            <person name="Wagner M."/>
        </authorList>
    </citation>
    <scope>NUCLEOTIDE SEQUENCE [LARGE SCALE GENOMIC DNA]</scope>
    <source>
        <strain>UWE25</strain>
    </source>
</reference>
<accession>Q6MEV1</accession>
<comment type="function">
    <text evidence="1">The UvrABC repair system catalyzes the recognition and processing of DNA lesions. A damage recognition complex composed of 2 UvrA and 2 UvrB subunits scans DNA for abnormalities. Upon binding of the UvrA(2)B(2) complex to a putative damaged site, the DNA wraps around one UvrB monomer. DNA wrap is dependent on ATP binding by UvrB and probably causes local melting of the DNA helix, facilitating insertion of UvrB beta-hairpin between the DNA strands. Then UvrB probes one DNA strand for the presence of a lesion. If a lesion is found the UvrA subunits dissociate and the UvrB-DNA preincision complex is formed. This complex is subsequently bound by UvrC and the second UvrB is released. If no lesion is found, the DNA wraps around the other UvrB subunit that will check the other stand for damage.</text>
</comment>
<comment type="subunit">
    <text evidence="1">Forms a heterotetramer with UvrA during the search for lesions. Interacts with UvrC in an incision complex.</text>
</comment>
<comment type="subcellular location">
    <subcellularLocation>
        <location evidence="1">Cytoplasm</location>
    </subcellularLocation>
</comment>
<comment type="domain">
    <text evidence="1">The beta-hairpin motif is involved in DNA binding.</text>
</comment>
<comment type="similarity">
    <text evidence="1">Belongs to the UvrB family.</text>
</comment>
<gene>
    <name evidence="1" type="primary">uvrB</name>
    <name type="ordered locus">pc0174</name>
</gene>
<evidence type="ECO:0000255" key="1">
    <source>
        <dbReference type="HAMAP-Rule" id="MF_00204"/>
    </source>
</evidence>
<name>UVRB_PARUW</name>
<dbReference type="EMBL" id="BX908798">
    <property type="protein sequence ID" value="CAF22898.1"/>
    <property type="molecule type" value="Genomic_DNA"/>
</dbReference>
<dbReference type="RefSeq" id="WP_011174724.1">
    <property type="nucleotide sequence ID" value="NC_005861.2"/>
</dbReference>
<dbReference type="SMR" id="Q6MEV1"/>
<dbReference type="STRING" id="264201.pc0174"/>
<dbReference type="KEGG" id="pcu:PC_RS00855"/>
<dbReference type="eggNOG" id="COG0556">
    <property type="taxonomic scope" value="Bacteria"/>
</dbReference>
<dbReference type="HOGENOM" id="CLU_009621_2_1_0"/>
<dbReference type="OrthoDB" id="9806651at2"/>
<dbReference type="Proteomes" id="UP000000529">
    <property type="component" value="Chromosome"/>
</dbReference>
<dbReference type="GO" id="GO:0005737">
    <property type="term" value="C:cytoplasm"/>
    <property type="evidence" value="ECO:0007669"/>
    <property type="project" value="UniProtKB-SubCell"/>
</dbReference>
<dbReference type="GO" id="GO:0009380">
    <property type="term" value="C:excinuclease repair complex"/>
    <property type="evidence" value="ECO:0007669"/>
    <property type="project" value="InterPro"/>
</dbReference>
<dbReference type="GO" id="GO:0005524">
    <property type="term" value="F:ATP binding"/>
    <property type="evidence" value="ECO:0007669"/>
    <property type="project" value="UniProtKB-UniRule"/>
</dbReference>
<dbReference type="GO" id="GO:0016887">
    <property type="term" value="F:ATP hydrolysis activity"/>
    <property type="evidence" value="ECO:0007669"/>
    <property type="project" value="InterPro"/>
</dbReference>
<dbReference type="GO" id="GO:0003677">
    <property type="term" value="F:DNA binding"/>
    <property type="evidence" value="ECO:0007669"/>
    <property type="project" value="UniProtKB-UniRule"/>
</dbReference>
<dbReference type="GO" id="GO:0009381">
    <property type="term" value="F:excinuclease ABC activity"/>
    <property type="evidence" value="ECO:0007669"/>
    <property type="project" value="UniProtKB-UniRule"/>
</dbReference>
<dbReference type="GO" id="GO:0006289">
    <property type="term" value="P:nucleotide-excision repair"/>
    <property type="evidence" value="ECO:0007669"/>
    <property type="project" value="UniProtKB-UniRule"/>
</dbReference>
<dbReference type="GO" id="GO:0009432">
    <property type="term" value="P:SOS response"/>
    <property type="evidence" value="ECO:0007669"/>
    <property type="project" value="UniProtKB-UniRule"/>
</dbReference>
<dbReference type="CDD" id="cd17916">
    <property type="entry name" value="DEXHc_UvrB"/>
    <property type="match status" value="1"/>
</dbReference>
<dbReference type="CDD" id="cd18790">
    <property type="entry name" value="SF2_C_UvrB"/>
    <property type="match status" value="1"/>
</dbReference>
<dbReference type="Gene3D" id="3.40.50.300">
    <property type="entry name" value="P-loop containing nucleotide triphosphate hydrolases"/>
    <property type="match status" value="3"/>
</dbReference>
<dbReference type="Gene3D" id="4.10.860.10">
    <property type="entry name" value="UVR domain"/>
    <property type="match status" value="1"/>
</dbReference>
<dbReference type="HAMAP" id="MF_00204">
    <property type="entry name" value="UvrB"/>
    <property type="match status" value="1"/>
</dbReference>
<dbReference type="InterPro" id="IPR006935">
    <property type="entry name" value="Helicase/UvrB_N"/>
</dbReference>
<dbReference type="InterPro" id="IPR014001">
    <property type="entry name" value="Helicase_ATP-bd"/>
</dbReference>
<dbReference type="InterPro" id="IPR001650">
    <property type="entry name" value="Helicase_C-like"/>
</dbReference>
<dbReference type="InterPro" id="IPR027417">
    <property type="entry name" value="P-loop_NTPase"/>
</dbReference>
<dbReference type="InterPro" id="IPR001943">
    <property type="entry name" value="UVR_dom"/>
</dbReference>
<dbReference type="InterPro" id="IPR036876">
    <property type="entry name" value="UVR_dom_sf"/>
</dbReference>
<dbReference type="InterPro" id="IPR004807">
    <property type="entry name" value="UvrB"/>
</dbReference>
<dbReference type="InterPro" id="IPR041471">
    <property type="entry name" value="UvrB_inter"/>
</dbReference>
<dbReference type="InterPro" id="IPR024759">
    <property type="entry name" value="UvrB_YAD/RRR_dom"/>
</dbReference>
<dbReference type="NCBIfam" id="NF003673">
    <property type="entry name" value="PRK05298.1"/>
    <property type="match status" value="1"/>
</dbReference>
<dbReference type="NCBIfam" id="TIGR00631">
    <property type="entry name" value="uvrb"/>
    <property type="match status" value="1"/>
</dbReference>
<dbReference type="PANTHER" id="PTHR24029">
    <property type="entry name" value="UVRABC SYSTEM PROTEIN B"/>
    <property type="match status" value="1"/>
</dbReference>
<dbReference type="PANTHER" id="PTHR24029:SF0">
    <property type="entry name" value="UVRABC SYSTEM PROTEIN B"/>
    <property type="match status" value="1"/>
</dbReference>
<dbReference type="Pfam" id="PF00271">
    <property type="entry name" value="Helicase_C"/>
    <property type="match status" value="1"/>
</dbReference>
<dbReference type="Pfam" id="PF04851">
    <property type="entry name" value="ResIII"/>
    <property type="match status" value="1"/>
</dbReference>
<dbReference type="Pfam" id="PF02151">
    <property type="entry name" value="UVR"/>
    <property type="match status" value="1"/>
</dbReference>
<dbReference type="Pfam" id="PF12344">
    <property type="entry name" value="UvrB"/>
    <property type="match status" value="1"/>
</dbReference>
<dbReference type="Pfam" id="PF17757">
    <property type="entry name" value="UvrB_inter"/>
    <property type="match status" value="1"/>
</dbReference>
<dbReference type="SMART" id="SM00487">
    <property type="entry name" value="DEXDc"/>
    <property type="match status" value="1"/>
</dbReference>
<dbReference type="SMART" id="SM00490">
    <property type="entry name" value="HELICc"/>
    <property type="match status" value="1"/>
</dbReference>
<dbReference type="SUPFAM" id="SSF46600">
    <property type="entry name" value="C-terminal UvrC-binding domain of UvrB"/>
    <property type="match status" value="1"/>
</dbReference>
<dbReference type="SUPFAM" id="SSF52540">
    <property type="entry name" value="P-loop containing nucleoside triphosphate hydrolases"/>
    <property type="match status" value="2"/>
</dbReference>
<dbReference type="PROSITE" id="PS51192">
    <property type="entry name" value="HELICASE_ATP_BIND_1"/>
    <property type="match status" value="1"/>
</dbReference>
<dbReference type="PROSITE" id="PS51194">
    <property type="entry name" value="HELICASE_CTER"/>
    <property type="match status" value="1"/>
</dbReference>
<dbReference type="PROSITE" id="PS50151">
    <property type="entry name" value="UVR"/>
    <property type="match status" value="1"/>
</dbReference>
<protein>
    <recommendedName>
        <fullName evidence="1">UvrABC system protein B</fullName>
        <shortName evidence="1">Protein UvrB</shortName>
    </recommendedName>
    <alternativeName>
        <fullName evidence="1">Excinuclease ABC subunit B</fullName>
    </alternativeName>
</protein>
<proteinExistence type="inferred from homology"/>